<feature type="chain" id="PRO_0000147967" description="Phosphoglucosamine mutase">
    <location>
        <begin position="1"/>
        <end position="450"/>
    </location>
</feature>
<feature type="active site" description="Phosphoserine intermediate" evidence="1">
    <location>
        <position position="102"/>
    </location>
</feature>
<feature type="binding site" description="via phosphate group" evidence="1">
    <location>
        <position position="102"/>
    </location>
    <ligand>
        <name>Mg(2+)</name>
        <dbReference type="ChEBI" id="CHEBI:18420"/>
    </ligand>
</feature>
<feature type="binding site" evidence="1">
    <location>
        <position position="242"/>
    </location>
    <ligand>
        <name>Mg(2+)</name>
        <dbReference type="ChEBI" id="CHEBI:18420"/>
    </ligand>
</feature>
<feature type="binding site" evidence="1">
    <location>
        <position position="244"/>
    </location>
    <ligand>
        <name>Mg(2+)</name>
        <dbReference type="ChEBI" id="CHEBI:18420"/>
    </ligand>
</feature>
<feature type="binding site" evidence="1">
    <location>
        <position position="246"/>
    </location>
    <ligand>
        <name>Mg(2+)</name>
        <dbReference type="ChEBI" id="CHEBI:18420"/>
    </ligand>
</feature>
<feature type="modified residue" description="Phosphoserine" evidence="1">
    <location>
        <position position="102"/>
    </location>
</feature>
<sequence length="450" mass="48923">MVKYFGTDGVRGIANKELTPELAFKLGRYGGYVLAHNEGADRPKVLVGRDTRVSGEMLESALISGLASIGAEVMRLGVISTPGVAYLTREMGAELGVMISASHNPVADNGIKFFGADGFKLSDAQEEEIETLLDQDNPDLPRPVGTDIVHFSDYFEGAQKYLSYLKSTIDVNLEGLKITLDGANGSTSALAPFLFGDLEADTETIGCSPDGYNINDNCGSTHPELLAEKVLETESDFGLAFDGDGDRLIAVDEKGNIIDGDQIMFVIGQEMHKNQELNNDMIVSTVMSNLGFYKALENEGIKSNKTKVGDRYVVEEMRKGNYNLGGEQSGHIVMMDYNTTGDGLLTGVQLAAVIKMSGKPLSELAAQMKKYPQSLINVKVTDKHHVEDNEDVKKVMDEVETEMNGEGRILVRPSGTEPLVRVMVEASTDEDAQRFAQRIADEVQSKMGLE</sequence>
<proteinExistence type="inferred from homology"/>
<dbReference type="EC" id="5.4.2.10" evidence="1"/>
<dbReference type="EMBL" id="AP006716">
    <property type="protein sequence ID" value="BAE04188.1"/>
    <property type="molecule type" value="Genomic_DNA"/>
</dbReference>
<dbReference type="RefSeq" id="WP_011275191.1">
    <property type="nucleotide sequence ID" value="NC_007168.1"/>
</dbReference>
<dbReference type="SMR" id="Q4L837"/>
<dbReference type="KEGG" id="sha:SH0879"/>
<dbReference type="eggNOG" id="COG1109">
    <property type="taxonomic scope" value="Bacteria"/>
</dbReference>
<dbReference type="HOGENOM" id="CLU_016950_7_0_9"/>
<dbReference type="OrthoDB" id="9806956at2"/>
<dbReference type="Proteomes" id="UP000000543">
    <property type="component" value="Chromosome"/>
</dbReference>
<dbReference type="GO" id="GO:0005829">
    <property type="term" value="C:cytosol"/>
    <property type="evidence" value="ECO:0007669"/>
    <property type="project" value="TreeGrafter"/>
</dbReference>
<dbReference type="GO" id="GO:0000287">
    <property type="term" value="F:magnesium ion binding"/>
    <property type="evidence" value="ECO:0007669"/>
    <property type="project" value="UniProtKB-UniRule"/>
</dbReference>
<dbReference type="GO" id="GO:0008966">
    <property type="term" value="F:phosphoglucosamine mutase activity"/>
    <property type="evidence" value="ECO:0007669"/>
    <property type="project" value="UniProtKB-UniRule"/>
</dbReference>
<dbReference type="GO" id="GO:0004615">
    <property type="term" value="F:phosphomannomutase activity"/>
    <property type="evidence" value="ECO:0007669"/>
    <property type="project" value="TreeGrafter"/>
</dbReference>
<dbReference type="GO" id="GO:0005975">
    <property type="term" value="P:carbohydrate metabolic process"/>
    <property type="evidence" value="ECO:0007669"/>
    <property type="project" value="InterPro"/>
</dbReference>
<dbReference type="GO" id="GO:0009252">
    <property type="term" value="P:peptidoglycan biosynthetic process"/>
    <property type="evidence" value="ECO:0007669"/>
    <property type="project" value="TreeGrafter"/>
</dbReference>
<dbReference type="GO" id="GO:0006048">
    <property type="term" value="P:UDP-N-acetylglucosamine biosynthetic process"/>
    <property type="evidence" value="ECO:0007669"/>
    <property type="project" value="TreeGrafter"/>
</dbReference>
<dbReference type="CDD" id="cd05802">
    <property type="entry name" value="GlmM"/>
    <property type="match status" value="1"/>
</dbReference>
<dbReference type="FunFam" id="3.30.310.50:FF:000001">
    <property type="entry name" value="Phosphoglucosamine mutase"/>
    <property type="match status" value="1"/>
</dbReference>
<dbReference type="FunFam" id="3.40.120.10:FF:000001">
    <property type="entry name" value="Phosphoglucosamine mutase"/>
    <property type="match status" value="1"/>
</dbReference>
<dbReference type="FunFam" id="3.40.120.10:FF:000002">
    <property type="entry name" value="Phosphoglucosamine mutase"/>
    <property type="match status" value="1"/>
</dbReference>
<dbReference type="Gene3D" id="3.40.120.10">
    <property type="entry name" value="Alpha-D-Glucose-1,6-Bisphosphate, subunit A, domain 3"/>
    <property type="match status" value="3"/>
</dbReference>
<dbReference type="Gene3D" id="3.30.310.50">
    <property type="entry name" value="Alpha-D-phosphohexomutase, C-terminal domain"/>
    <property type="match status" value="1"/>
</dbReference>
<dbReference type="HAMAP" id="MF_01554_B">
    <property type="entry name" value="GlmM_B"/>
    <property type="match status" value="1"/>
</dbReference>
<dbReference type="InterPro" id="IPR005844">
    <property type="entry name" value="A-D-PHexomutase_a/b/a-I"/>
</dbReference>
<dbReference type="InterPro" id="IPR016055">
    <property type="entry name" value="A-D-PHexomutase_a/b/a-I/II/III"/>
</dbReference>
<dbReference type="InterPro" id="IPR005845">
    <property type="entry name" value="A-D-PHexomutase_a/b/a-II"/>
</dbReference>
<dbReference type="InterPro" id="IPR005846">
    <property type="entry name" value="A-D-PHexomutase_a/b/a-III"/>
</dbReference>
<dbReference type="InterPro" id="IPR005843">
    <property type="entry name" value="A-D-PHexomutase_C"/>
</dbReference>
<dbReference type="InterPro" id="IPR036900">
    <property type="entry name" value="A-D-PHexomutase_C_sf"/>
</dbReference>
<dbReference type="InterPro" id="IPR016066">
    <property type="entry name" value="A-D-PHexomutase_CS"/>
</dbReference>
<dbReference type="InterPro" id="IPR005841">
    <property type="entry name" value="Alpha-D-phosphohexomutase_SF"/>
</dbReference>
<dbReference type="InterPro" id="IPR006352">
    <property type="entry name" value="GlmM_bact"/>
</dbReference>
<dbReference type="InterPro" id="IPR050060">
    <property type="entry name" value="Phosphoglucosamine_mutase"/>
</dbReference>
<dbReference type="NCBIfam" id="TIGR01455">
    <property type="entry name" value="glmM"/>
    <property type="match status" value="1"/>
</dbReference>
<dbReference type="NCBIfam" id="NF008139">
    <property type="entry name" value="PRK10887.1"/>
    <property type="match status" value="1"/>
</dbReference>
<dbReference type="PANTHER" id="PTHR42946:SF1">
    <property type="entry name" value="PHOSPHOGLUCOMUTASE (ALPHA-D-GLUCOSE-1,6-BISPHOSPHATE-DEPENDENT)"/>
    <property type="match status" value="1"/>
</dbReference>
<dbReference type="PANTHER" id="PTHR42946">
    <property type="entry name" value="PHOSPHOHEXOSE MUTASE"/>
    <property type="match status" value="1"/>
</dbReference>
<dbReference type="Pfam" id="PF02878">
    <property type="entry name" value="PGM_PMM_I"/>
    <property type="match status" value="1"/>
</dbReference>
<dbReference type="Pfam" id="PF02879">
    <property type="entry name" value="PGM_PMM_II"/>
    <property type="match status" value="1"/>
</dbReference>
<dbReference type="Pfam" id="PF02880">
    <property type="entry name" value="PGM_PMM_III"/>
    <property type="match status" value="1"/>
</dbReference>
<dbReference type="Pfam" id="PF00408">
    <property type="entry name" value="PGM_PMM_IV"/>
    <property type="match status" value="1"/>
</dbReference>
<dbReference type="PRINTS" id="PR00509">
    <property type="entry name" value="PGMPMM"/>
</dbReference>
<dbReference type="SUPFAM" id="SSF55957">
    <property type="entry name" value="Phosphoglucomutase, C-terminal domain"/>
    <property type="match status" value="1"/>
</dbReference>
<dbReference type="SUPFAM" id="SSF53738">
    <property type="entry name" value="Phosphoglucomutase, first 3 domains"/>
    <property type="match status" value="3"/>
</dbReference>
<dbReference type="PROSITE" id="PS00710">
    <property type="entry name" value="PGM_PMM"/>
    <property type="match status" value="1"/>
</dbReference>
<evidence type="ECO:0000255" key="1">
    <source>
        <dbReference type="HAMAP-Rule" id="MF_01554"/>
    </source>
</evidence>
<reference key="1">
    <citation type="journal article" date="2005" name="J. Bacteriol.">
        <title>Whole-genome sequencing of Staphylococcus haemolyticus uncovers the extreme plasticity of its genome and the evolution of human-colonizing staphylococcal species.</title>
        <authorList>
            <person name="Takeuchi F."/>
            <person name="Watanabe S."/>
            <person name="Baba T."/>
            <person name="Yuzawa H."/>
            <person name="Ito T."/>
            <person name="Morimoto Y."/>
            <person name="Kuroda M."/>
            <person name="Cui L."/>
            <person name="Takahashi M."/>
            <person name="Ankai A."/>
            <person name="Baba S."/>
            <person name="Fukui S."/>
            <person name="Lee J.C."/>
            <person name="Hiramatsu K."/>
        </authorList>
    </citation>
    <scope>NUCLEOTIDE SEQUENCE [LARGE SCALE GENOMIC DNA]</scope>
    <source>
        <strain>JCSC1435</strain>
    </source>
</reference>
<gene>
    <name evidence="1" type="primary">glmM</name>
    <name type="ordered locus">SH0879</name>
</gene>
<organism>
    <name type="scientific">Staphylococcus haemolyticus (strain JCSC1435)</name>
    <dbReference type="NCBI Taxonomy" id="279808"/>
    <lineage>
        <taxon>Bacteria</taxon>
        <taxon>Bacillati</taxon>
        <taxon>Bacillota</taxon>
        <taxon>Bacilli</taxon>
        <taxon>Bacillales</taxon>
        <taxon>Staphylococcaceae</taxon>
        <taxon>Staphylococcus</taxon>
    </lineage>
</organism>
<comment type="function">
    <text evidence="1">Catalyzes the conversion of glucosamine-6-phosphate to glucosamine-1-phosphate.</text>
</comment>
<comment type="catalytic activity">
    <reaction evidence="1">
        <text>alpha-D-glucosamine 1-phosphate = D-glucosamine 6-phosphate</text>
        <dbReference type="Rhea" id="RHEA:23424"/>
        <dbReference type="ChEBI" id="CHEBI:58516"/>
        <dbReference type="ChEBI" id="CHEBI:58725"/>
        <dbReference type="EC" id="5.4.2.10"/>
    </reaction>
</comment>
<comment type="cofactor">
    <cofactor evidence="1">
        <name>Mg(2+)</name>
        <dbReference type="ChEBI" id="CHEBI:18420"/>
    </cofactor>
    <text evidence="1">Binds 1 Mg(2+) ion per subunit.</text>
</comment>
<comment type="PTM">
    <text evidence="1">Activated by phosphorylation.</text>
</comment>
<comment type="similarity">
    <text evidence="1">Belongs to the phosphohexose mutase family.</text>
</comment>
<keyword id="KW-0413">Isomerase</keyword>
<keyword id="KW-0460">Magnesium</keyword>
<keyword id="KW-0479">Metal-binding</keyword>
<keyword id="KW-0597">Phosphoprotein</keyword>
<protein>
    <recommendedName>
        <fullName evidence="1">Phosphoglucosamine mutase</fullName>
        <ecNumber evidence="1">5.4.2.10</ecNumber>
    </recommendedName>
</protein>
<name>GLMM_STAHJ</name>
<accession>Q4L837</accession>